<comment type="function">
    <text evidence="1">Required for maturation of urease via the functional incorporation of the urease nickel metallocenter.</text>
</comment>
<comment type="subunit">
    <text evidence="1">UreD, UreF and UreG form a complex that acts as a GTP-hydrolysis-dependent molecular chaperone, activating the urease apoprotein by helping to assemble the nickel containing metallocenter of UreC. The UreE protein probably delivers the nickel.</text>
</comment>
<comment type="subcellular location">
    <subcellularLocation>
        <location evidence="1">Cytoplasm</location>
    </subcellularLocation>
</comment>
<comment type="similarity">
    <text evidence="1">Belongs to the UreD family.</text>
</comment>
<comment type="sequence caution" evidence="3">
    <conflict type="erroneous initiation">
        <sequence resource="EMBL-CDS" id="AAK88144"/>
    </conflict>
</comment>
<organism>
    <name type="scientific">Agrobacterium fabrum (strain C58 / ATCC 33970)</name>
    <name type="common">Agrobacterium tumefaciens (strain C58)</name>
    <dbReference type="NCBI Taxonomy" id="176299"/>
    <lineage>
        <taxon>Bacteria</taxon>
        <taxon>Pseudomonadati</taxon>
        <taxon>Pseudomonadota</taxon>
        <taxon>Alphaproteobacteria</taxon>
        <taxon>Hyphomicrobiales</taxon>
        <taxon>Rhizobiaceae</taxon>
        <taxon>Rhizobium/Agrobacterium group</taxon>
        <taxon>Agrobacterium</taxon>
        <taxon>Agrobacterium tumefaciens complex</taxon>
    </lineage>
</organism>
<proteinExistence type="inferred from homology"/>
<keyword id="KW-0143">Chaperone</keyword>
<keyword id="KW-0963">Cytoplasm</keyword>
<keyword id="KW-0996">Nickel insertion</keyword>
<keyword id="KW-1185">Reference proteome</keyword>
<sequence length="284" mass="30448">MQSEQQAIGASGCEDAQQPVRQQRARGRGRIVTKAVEGRSRLDELFQEGCAKIRLPDTFSNEAEAILINSSGGLTGGDDIEWQATAGAGTSLVVTTQACEKVYKASSGTATVTARISAGPGAKLHWLPQETILFDRASLNRRLEADLDQSSEFIAVEAVLLGRQAMGEAMTHGLFRDRWRIRHGGRLVHAEELLLEGEVAELTAKPAVLAGQVAFATLLYIGPLSEALLPKIRAIAGESGGASEWQGKLVVRVSAADGFSLRKLLFPIISLLRNGAPVPKVWNL</sequence>
<gene>
    <name evidence="1" type="primary">ureD</name>
    <name type="ordered locus">Atu2408</name>
    <name type="ORF">AGR_C_4369</name>
</gene>
<evidence type="ECO:0000255" key="1">
    <source>
        <dbReference type="HAMAP-Rule" id="MF_01384"/>
    </source>
</evidence>
<evidence type="ECO:0000256" key="2">
    <source>
        <dbReference type="SAM" id="MobiDB-lite"/>
    </source>
</evidence>
<evidence type="ECO:0000305" key="3"/>
<feature type="chain" id="PRO_0000340403" description="Urease accessory protein UreD">
    <location>
        <begin position="1"/>
        <end position="284"/>
    </location>
</feature>
<feature type="region of interest" description="Disordered" evidence="2">
    <location>
        <begin position="1"/>
        <end position="28"/>
    </location>
</feature>
<dbReference type="EMBL" id="AE007869">
    <property type="protein sequence ID" value="AAK88144.2"/>
    <property type="status" value="ALT_INIT"/>
    <property type="molecule type" value="Genomic_DNA"/>
</dbReference>
<dbReference type="RefSeq" id="NP_355359.2">
    <property type="nucleotide sequence ID" value="NC_003062.2"/>
</dbReference>
<dbReference type="RefSeq" id="WP_035256001.1">
    <property type="nucleotide sequence ID" value="NC_003062.2"/>
</dbReference>
<dbReference type="SMR" id="Q8U544"/>
<dbReference type="STRING" id="176299.Atu2408"/>
<dbReference type="EnsemblBacteria" id="AAK88144">
    <property type="protein sequence ID" value="AAK88144"/>
    <property type="gene ID" value="Atu2408"/>
</dbReference>
<dbReference type="GeneID" id="1134446"/>
<dbReference type="KEGG" id="atu:Atu2408"/>
<dbReference type="PATRIC" id="fig|176299.10.peg.2417"/>
<dbReference type="eggNOG" id="COG0829">
    <property type="taxonomic scope" value="Bacteria"/>
</dbReference>
<dbReference type="HOGENOM" id="CLU_056339_2_0_5"/>
<dbReference type="OrthoDB" id="9798842at2"/>
<dbReference type="Proteomes" id="UP000000813">
    <property type="component" value="Chromosome circular"/>
</dbReference>
<dbReference type="GO" id="GO:0005737">
    <property type="term" value="C:cytoplasm"/>
    <property type="evidence" value="ECO:0007669"/>
    <property type="project" value="UniProtKB-SubCell"/>
</dbReference>
<dbReference type="GO" id="GO:0016151">
    <property type="term" value="F:nickel cation binding"/>
    <property type="evidence" value="ECO:0007669"/>
    <property type="project" value="UniProtKB-UniRule"/>
</dbReference>
<dbReference type="HAMAP" id="MF_01384">
    <property type="entry name" value="UreD"/>
    <property type="match status" value="1"/>
</dbReference>
<dbReference type="InterPro" id="IPR002669">
    <property type="entry name" value="UreD"/>
</dbReference>
<dbReference type="PANTHER" id="PTHR33643">
    <property type="entry name" value="UREASE ACCESSORY PROTEIN D"/>
    <property type="match status" value="1"/>
</dbReference>
<dbReference type="PANTHER" id="PTHR33643:SF1">
    <property type="entry name" value="UREASE ACCESSORY PROTEIN D"/>
    <property type="match status" value="1"/>
</dbReference>
<dbReference type="Pfam" id="PF01774">
    <property type="entry name" value="UreD"/>
    <property type="match status" value="1"/>
</dbReference>
<name>URED_AGRFC</name>
<reference key="1">
    <citation type="journal article" date="2001" name="Science">
        <title>The genome of the natural genetic engineer Agrobacterium tumefaciens C58.</title>
        <authorList>
            <person name="Wood D.W."/>
            <person name="Setubal J.C."/>
            <person name="Kaul R."/>
            <person name="Monks D.E."/>
            <person name="Kitajima J.P."/>
            <person name="Okura V.K."/>
            <person name="Zhou Y."/>
            <person name="Chen L."/>
            <person name="Wood G.E."/>
            <person name="Almeida N.F. Jr."/>
            <person name="Woo L."/>
            <person name="Chen Y."/>
            <person name="Paulsen I.T."/>
            <person name="Eisen J.A."/>
            <person name="Karp P.D."/>
            <person name="Bovee D. Sr."/>
            <person name="Chapman P."/>
            <person name="Clendenning J."/>
            <person name="Deatherage G."/>
            <person name="Gillet W."/>
            <person name="Grant C."/>
            <person name="Kutyavin T."/>
            <person name="Levy R."/>
            <person name="Li M.-J."/>
            <person name="McClelland E."/>
            <person name="Palmieri A."/>
            <person name="Raymond C."/>
            <person name="Rouse G."/>
            <person name="Saenphimmachak C."/>
            <person name="Wu Z."/>
            <person name="Romero P."/>
            <person name="Gordon D."/>
            <person name="Zhang S."/>
            <person name="Yoo H."/>
            <person name="Tao Y."/>
            <person name="Biddle P."/>
            <person name="Jung M."/>
            <person name="Krespan W."/>
            <person name="Perry M."/>
            <person name="Gordon-Kamm B."/>
            <person name="Liao L."/>
            <person name="Kim S."/>
            <person name="Hendrick C."/>
            <person name="Zhao Z.-Y."/>
            <person name="Dolan M."/>
            <person name="Chumley F."/>
            <person name="Tingey S.V."/>
            <person name="Tomb J.-F."/>
            <person name="Gordon M.P."/>
            <person name="Olson M.V."/>
            <person name="Nester E.W."/>
        </authorList>
    </citation>
    <scope>NUCLEOTIDE SEQUENCE [LARGE SCALE GENOMIC DNA]</scope>
    <source>
        <strain>C58 / ATCC 33970</strain>
    </source>
</reference>
<reference key="2">
    <citation type="journal article" date="2001" name="Science">
        <title>Genome sequence of the plant pathogen and biotechnology agent Agrobacterium tumefaciens C58.</title>
        <authorList>
            <person name="Goodner B."/>
            <person name="Hinkle G."/>
            <person name="Gattung S."/>
            <person name="Miller N."/>
            <person name="Blanchard M."/>
            <person name="Qurollo B."/>
            <person name="Goldman B.S."/>
            <person name="Cao Y."/>
            <person name="Askenazi M."/>
            <person name="Halling C."/>
            <person name="Mullin L."/>
            <person name="Houmiel K."/>
            <person name="Gordon J."/>
            <person name="Vaudin M."/>
            <person name="Iartchouk O."/>
            <person name="Epp A."/>
            <person name="Liu F."/>
            <person name="Wollam C."/>
            <person name="Allinger M."/>
            <person name="Doughty D."/>
            <person name="Scott C."/>
            <person name="Lappas C."/>
            <person name="Markelz B."/>
            <person name="Flanagan C."/>
            <person name="Crowell C."/>
            <person name="Gurson J."/>
            <person name="Lomo C."/>
            <person name="Sear C."/>
            <person name="Strub G."/>
            <person name="Cielo C."/>
            <person name="Slater S."/>
        </authorList>
    </citation>
    <scope>NUCLEOTIDE SEQUENCE [LARGE SCALE GENOMIC DNA]</scope>
    <source>
        <strain>C58 / ATCC 33970</strain>
    </source>
</reference>
<protein>
    <recommendedName>
        <fullName evidence="1">Urease accessory protein UreD</fullName>
    </recommendedName>
</protein>
<accession>Q8U544</accession>